<dbReference type="EMBL" id="BC078910">
    <property type="protein sequence ID" value="AAH78910.1"/>
    <property type="molecule type" value="mRNA"/>
</dbReference>
<dbReference type="RefSeq" id="NP_001011999.1">
    <property type="nucleotide sequence ID" value="NM_001011999.3"/>
</dbReference>
<dbReference type="BMRB" id="Q6AYU1"/>
<dbReference type="SMR" id="Q6AYU1"/>
<dbReference type="FunCoup" id="Q6AYU1">
    <property type="interactions" value="3338"/>
</dbReference>
<dbReference type="STRING" id="10116.ENSRNOP00000075745"/>
<dbReference type="PhosphoSitePlus" id="Q6AYU1"/>
<dbReference type="jPOST" id="Q6AYU1"/>
<dbReference type="PaxDb" id="10116-ENSRNOP00000019471"/>
<dbReference type="DNASU" id="300891"/>
<dbReference type="GeneID" id="300891"/>
<dbReference type="KEGG" id="rno:300891"/>
<dbReference type="UCSC" id="RGD:1307938">
    <property type="organism name" value="rat"/>
</dbReference>
<dbReference type="AGR" id="RGD:1307938"/>
<dbReference type="CTD" id="10933"/>
<dbReference type="RGD" id="1307938">
    <property type="gene designation" value="Morf4l1"/>
</dbReference>
<dbReference type="VEuPathDB" id="HostDB:ENSRNOG00000058412"/>
<dbReference type="eggNOG" id="KOG3001">
    <property type="taxonomic scope" value="Eukaryota"/>
</dbReference>
<dbReference type="HOGENOM" id="CLU_039566_4_0_1"/>
<dbReference type="InParanoid" id="Q6AYU1"/>
<dbReference type="OrthoDB" id="124855at2759"/>
<dbReference type="PRO" id="PR:Q6AYU1"/>
<dbReference type="Proteomes" id="UP000002494">
    <property type="component" value="Chromosome 8"/>
</dbReference>
<dbReference type="Bgee" id="ENSRNOG00000058412">
    <property type="expression patterns" value="Expressed in cerebellum and 19 other cell types or tissues"/>
</dbReference>
<dbReference type="GO" id="GO:0035267">
    <property type="term" value="C:NuA4 histone acetyltransferase complex"/>
    <property type="evidence" value="ECO:0000250"/>
    <property type="project" value="UniProtKB"/>
</dbReference>
<dbReference type="GO" id="GO:0000786">
    <property type="term" value="C:nucleosome"/>
    <property type="evidence" value="ECO:0000266"/>
    <property type="project" value="RGD"/>
</dbReference>
<dbReference type="GO" id="GO:0070822">
    <property type="term" value="C:Sin3-type complex"/>
    <property type="evidence" value="ECO:0000250"/>
    <property type="project" value="UniProtKB"/>
</dbReference>
<dbReference type="GO" id="GO:0003682">
    <property type="term" value="F:chromatin binding"/>
    <property type="evidence" value="ECO:0000266"/>
    <property type="project" value="RGD"/>
</dbReference>
<dbReference type="GO" id="GO:0008283">
    <property type="term" value="P:cell population proliferation"/>
    <property type="evidence" value="ECO:0000266"/>
    <property type="project" value="RGD"/>
</dbReference>
<dbReference type="GO" id="GO:0006325">
    <property type="term" value="P:chromatin organization"/>
    <property type="evidence" value="ECO:0007669"/>
    <property type="project" value="UniProtKB-KW"/>
</dbReference>
<dbReference type="GO" id="GO:0000724">
    <property type="term" value="P:double-strand break repair via homologous recombination"/>
    <property type="evidence" value="ECO:0000250"/>
    <property type="project" value="UniProtKB"/>
</dbReference>
<dbReference type="GO" id="GO:0048144">
    <property type="term" value="P:fibroblast proliferation"/>
    <property type="evidence" value="ECO:0000266"/>
    <property type="project" value="RGD"/>
</dbReference>
<dbReference type="GO" id="GO:1905168">
    <property type="term" value="P:positive regulation of double-strand break repair via homologous recombination"/>
    <property type="evidence" value="ECO:0000266"/>
    <property type="project" value="RGD"/>
</dbReference>
<dbReference type="GO" id="GO:0051726">
    <property type="term" value="P:regulation of cell cycle"/>
    <property type="evidence" value="ECO:0000266"/>
    <property type="project" value="RGD"/>
</dbReference>
<dbReference type="GO" id="GO:0006355">
    <property type="term" value="P:regulation of DNA-templated transcription"/>
    <property type="evidence" value="ECO:0007669"/>
    <property type="project" value="InterPro"/>
</dbReference>
<dbReference type="CDD" id="cd18983">
    <property type="entry name" value="CBD_MSL3_like"/>
    <property type="match status" value="1"/>
</dbReference>
<dbReference type="FunFam" id="1.10.274.30:FF:000001">
    <property type="entry name" value="Mortality factor 4-like protein 1"/>
    <property type="match status" value="1"/>
</dbReference>
<dbReference type="FunFam" id="2.30.30.140:FF:000024">
    <property type="entry name" value="Mortality factor 4-like protein 1"/>
    <property type="match status" value="1"/>
</dbReference>
<dbReference type="Gene3D" id="2.30.30.140">
    <property type="match status" value="1"/>
</dbReference>
<dbReference type="Gene3D" id="1.10.274.30">
    <property type="entry name" value="MRG domain"/>
    <property type="match status" value="1"/>
</dbReference>
<dbReference type="InterPro" id="IPR016197">
    <property type="entry name" value="Chromo-like_dom_sf"/>
</dbReference>
<dbReference type="InterPro" id="IPR000953">
    <property type="entry name" value="Chromo/chromo_shadow_dom"/>
</dbReference>
<dbReference type="InterPro" id="IPR008676">
    <property type="entry name" value="MRG"/>
</dbReference>
<dbReference type="InterPro" id="IPR038217">
    <property type="entry name" value="MRG_C_sf"/>
</dbReference>
<dbReference type="InterPro" id="IPR026541">
    <property type="entry name" value="MRG_dom"/>
</dbReference>
<dbReference type="InterPro" id="IPR053820">
    <property type="entry name" value="MSL3_chromo-like"/>
</dbReference>
<dbReference type="PANTHER" id="PTHR10880">
    <property type="entry name" value="MORTALITY FACTOR 4-LIKE PROTEIN"/>
    <property type="match status" value="1"/>
</dbReference>
<dbReference type="PANTHER" id="PTHR10880:SF51">
    <property type="entry name" value="MORTALITY FACTOR 4-LIKE PROTEIN 1"/>
    <property type="match status" value="1"/>
</dbReference>
<dbReference type="Pfam" id="PF05712">
    <property type="entry name" value="MRG"/>
    <property type="match status" value="1"/>
</dbReference>
<dbReference type="Pfam" id="PF22732">
    <property type="entry name" value="MSL3_chromo-like"/>
    <property type="match status" value="1"/>
</dbReference>
<dbReference type="PIRSF" id="PIRSF038133">
    <property type="entry name" value="HAT_Nua4_EAF3/MRG15"/>
    <property type="match status" value="1"/>
</dbReference>
<dbReference type="SMART" id="SM00298">
    <property type="entry name" value="CHROMO"/>
    <property type="match status" value="1"/>
</dbReference>
<dbReference type="SUPFAM" id="SSF54160">
    <property type="entry name" value="Chromo domain-like"/>
    <property type="match status" value="1"/>
</dbReference>
<dbReference type="PROSITE" id="PS51640">
    <property type="entry name" value="MRG"/>
    <property type="match status" value="1"/>
</dbReference>
<reference key="1">
    <citation type="journal article" date="2004" name="Genome Res.">
        <title>The status, quality, and expansion of the NIH full-length cDNA project: the Mammalian Gene Collection (MGC).</title>
        <authorList>
            <consortium name="The MGC Project Team"/>
        </authorList>
    </citation>
    <scope>NUCLEOTIDE SEQUENCE [LARGE SCALE MRNA]</scope>
    <source>
        <tissue>Testis</tissue>
    </source>
</reference>
<protein>
    <recommendedName>
        <fullName>Mortality factor 4-like protein 1</fullName>
    </recommendedName>
    <alternativeName>
        <fullName>MORF-related gene 15 protein</fullName>
    </alternativeName>
    <alternativeName>
        <fullName>Transcription factor-like protein MRG15</fullName>
    </alternativeName>
</protein>
<feature type="chain" id="PRO_0000088767" description="Mortality factor 4-like protein 1">
    <location>
        <begin position="1"/>
        <end position="323"/>
    </location>
</feature>
<feature type="domain" description="Tudor-knot" evidence="3">
    <location>
        <begin position="12"/>
        <end position="62"/>
    </location>
</feature>
<feature type="domain" description="MRG" evidence="4">
    <location>
        <begin position="152"/>
        <end position="323"/>
    </location>
</feature>
<feature type="region of interest" description="Disordered" evidence="5">
    <location>
        <begin position="77"/>
        <end position="143"/>
    </location>
</feature>
<feature type="region of interest" description="Sufficient for interaction with SIN3A" evidence="1">
    <location>
        <begin position="94"/>
        <end position="227"/>
    </location>
</feature>
<feature type="region of interest" description="Interaction with RB1-1" evidence="1">
    <location>
        <begin position="125"/>
        <end position="191"/>
    </location>
</feature>
<feature type="region of interest" description="Sufficient for interaction with PHF12" evidence="1">
    <location>
        <begin position="149"/>
        <end position="303"/>
    </location>
</feature>
<feature type="region of interest" description="Interaction with RB1-2" evidence="1">
    <location>
        <begin position="284"/>
        <end position="305"/>
    </location>
</feature>
<feature type="modified residue" description="N6-acetyllysine" evidence="2">
    <location>
        <position position="104"/>
    </location>
</feature>
<name>MO4L1_RAT</name>
<accession>Q6AYU1</accession>
<gene>
    <name type="primary">Morf4l1</name>
</gene>
<comment type="function">
    <text evidence="2">Component of the NuA4 histone acetyltransferase (HAT) complex which is involved in transcriptional activation of select genes principally by acetylation of nucleosomal histones H4 and H2A. This modification may both alter nucleosome - DNA interactions and promote interaction of the modified histones with other proteins which positively regulate transcription. This complex may be required for the activation of transcriptional programs associated with oncogene and proto-oncogene mediated growth induction, tumor suppressor mediated growth arrest and replicative senescence, apoptosis, and DNA repair. The NuA4 complex ATPase and helicase activities seem to be, at least in part, contributed by the association of RUVBL1 and RUVBL2 with EP400. NuA4 may also play a direct role in DNA repair when directly recruited to sites of DNA damage. As part of the SIN3B complex represses transcription and counteracts the histone acetyltransferase activity of EP300 through the recognition H3K27ac marks by PHF12 and the activity of the histone deacetylase HDAC2. SIN3B complex is recruited downstream of the constitutively active genes transcriptional start sites through interaction with histones and mitigates histone acetylation and RNA polymerase II progression within transcribed regions contributing to the regulation of transcription. Required for homologous recombination repair (HRR) and resistance to mitomycin C (MMC). Involved in the localization of PALB2, BRCA2 and RAD51, but not BRCA1, to DNA-damage foci.</text>
</comment>
<comment type="subunit">
    <text evidence="2">Component of the NuA4 histone acetyltransferase complex which contains the catalytic subunit KAT5/TIP60 and the subunits EP400, TRRAP/PAF400, BRD8/SMAP, EPC1, DMAP1/DNMAP1, RUVBL1/TIP49, RUVBL2, ING3, actin, ACTL6A/BAF53A, MORF4L1/MRG15, MORF4L2/MRGX, MRGBP, YEATS4/GAS41, VPS72/YL1 and MEAF6. The NuA4 complex interacts with MYC and the adenovirus E1A protein. MORF4L1 may also participate in the formation of NuA4 related complexes which lack the KAT5/TIP60 catalytic subunit, but which include the SWI/SNF related protein SRCAP. Component of the mSin3A histone deacetylase complex, which includes SIN3A, HDAC2, ARID4B, MORF4L1, RBBP4/RbAp48, and RBBP7/RbAp46. May also interact with PHF12 and one or more as yet undefined members of the TLE (transducin-like enhancer of split) family of transcriptional repressors. Component of the SIN3B complex, which includes SIN3B, HDAC2 or HDAC1, PHF12 and MORF4L1. Interacts with RB1 and KAT8. Interacts with the N-terminus of MRFAP1. Found in a complex composed of MORF4L1, MRFAP1 and RB1. Interacts with the entire BRCA complex, which contains BRCA1, PALB2, BRCA2 and RAD51. Interacts with PALB2. Forms a complex with MSL1 and NUPR1.</text>
</comment>
<comment type="subcellular location">
    <subcellularLocation>
        <location evidence="2">Nucleus</location>
    </subcellularLocation>
</comment>
<evidence type="ECO:0000250" key="1"/>
<evidence type="ECO:0000250" key="2">
    <source>
        <dbReference type="UniProtKB" id="Q9UBU8"/>
    </source>
</evidence>
<evidence type="ECO:0000255" key="3"/>
<evidence type="ECO:0000255" key="4">
    <source>
        <dbReference type="PROSITE-ProRule" id="PRU00972"/>
    </source>
</evidence>
<evidence type="ECO:0000256" key="5">
    <source>
        <dbReference type="SAM" id="MobiDB-lite"/>
    </source>
</evidence>
<organism>
    <name type="scientific">Rattus norvegicus</name>
    <name type="common">Rat</name>
    <dbReference type="NCBI Taxonomy" id="10116"/>
    <lineage>
        <taxon>Eukaryota</taxon>
        <taxon>Metazoa</taxon>
        <taxon>Chordata</taxon>
        <taxon>Craniata</taxon>
        <taxon>Vertebrata</taxon>
        <taxon>Euteleostomi</taxon>
        <taxon>Mammalia</taxon>
        <taxon>Eutheria</taxon>
        <taxon>Euarchontoglires</taxon>
        <taxon>Glires</taxon>
        <taxon>Rodentia</taxon>
        <taxon>Myomorpha</taxon>
        <taxon>Muroidea</taxon>
        <taxon>Muridae</taxon>
        <taxon>Murinae</taxon>
        <taxon>Rattus</taxon>
    </lineage>
</organism>
<proteinExistence type="evidence at transcript level"/>
<sequence>MAPKQDPKPKFQEGERVLCFHGPLLYEAKCVKVAIKDKQVKYFIHYSGWNKNWDEWVPESRVLKYVDANLQKQRELQKANQEQYAEGKMRGAAPGKKTSGLQQKNVEVKTKKNKQKTPGNGDGGSTSETPQPPRKKRARVDPTVENEETFMNRVEVKVKIPEELKPWLVDDWDLITRQKQLFYLPAKKNVDSILEDYANYKKSRGNTDNKEYAVNEVVAGIKEYFNVMLGTQLLYKFERPQYAEILADHPDAPMSQVYGAPHLLRLFVRIGAMLAYTPLDEKSLALLLNYLHDFLKYLAKNSATLFSASDYEVAPPEYHRKAV</sequence>
<keyword id="KW-0007">Acetylation</keyword>
<keyword id="KW-0156">Chromatin regulator</keyword>
<keyword id="KW-0227">DNA damage</keyword>
<keyword id="KW-0233">DNA recombination</keyword>
<keyword id="KW-0234">DNA repair</keyword>
<keyword id="KW-0341">Growth regulation</keyword>
<keyword id="KW-0539">Nucleus</keyword>
<keyword id="KW-1185">Reference proteome</keyword>
<keyword id="KW-0804">Transcription</keyword>
<keyword id="KW-0805">Transcription regulation</keyword>